<organism>
    <name type="scientific">Vibrio parahaemolyticus serotype O3:K6 (strain RIMD 2210633)</name>
    <dbReference type="NCBI Taxonomy" id="223926"/>
    <lineage>
        <taxon>Bacteria</taxon>
        <taxon>Pseudomonadati</taxon>
        <taxon>Pseudomonadota</taxon>
        <taxon>Gammaproteobacteria</taxon>
        <taxon>Vibrionales</taxon>
        <taxon>Vibrionaceae</taxon>
        <taxon>Vibrio</taxon>
    </lineage>
</organism>
<protein>
    <recommendedName>
        <fullName evidence="1">tRNA-dihydrouridine synthase B</fullName>
        <ecNumber evidence="1">1.3.1.-</ecNumber>
    </recommendedName>
</protein>
<comment type="function">
    <text evidence="1">Catalyzes the synthesis of 5,6-dihydrouridine (D), a modified base found in the D-loop of most tRNAs, via the reduction of the C5-C6 double bond in target uridines.</text>
</comment>
<comment type="catalytic activity">
    <reaction evidence="1">
        <text>a 5,6-dihydrouridine in tRNA + NAD(+) = a uridine in tRNA + NADH + H(+)</text>
        <dbReference type="Rhea" id="RHEA:54452"/>
        <dbReference type="Rhea" id="RHEA-COMP:13339"/>
        <dbReference type="Rhea" id="RHEA-COMP:13887"/>
        <dbReference type="ChEBI" id="CHEBI:15378"/>
        <dbReference type="ChEBI" id="CHEBI:57540"/>
        <dbReference type="ChEBI" id="CHEBI:57945"/>
        <dbReference type="ChEBI" id="CHEBI:65315"/>
        <dbReference type="ChEBI" id="CHEBI:74443"/>
    </reaction>
</comment>
<comment type="catalytic activity">
    <reaction evidence="1">
        <text>a 5,6-dihydrouridine in tRNA + NADP(+) = a uridine in tRNA + NADPH + H(+)</text>
        <dbReference type="Rhea" id="RHEA:23624"/>
        <dbReference type="Rhea" id="RHEA-COMP:13339"/>
        <dbReference type="Rhea" id="RHEA-COMP:13887"/>
        <dbReference type="ChEBI" id="CHEBI:15378"/>
        <dbReference type="ChEBI" id="CHEBI:57783"/>
        <dbReference type="ChEBI" id="CHEBI:58349"/>
        <dbReference type="ChEBI" id="CHEBI:65315"/>
        <dbReference type="ChEBI" id="CHEBI:74443"/>
    </reaction>
</comment>
<comment type="cofactor">
    <cofactor evidence="1">
        <name>FMN</name>
        <dbReference type="ChEBI" id="CHEBI:58210"/>
    </cofactor>
</comment>
<comment type="similarity">
    <text evidence="1">Belongs to the Dus family. DusB subfamily.</text>
</comment>
<comment type="sequence caution" evidence="2">
    <conflict type="erroneous initiation">
        <sequence resource="EMBL-CDS" id="BAC61147"/>
    </conflict>
</comment>
<dbReference type="EC" id="1.3.1.-" evidence="1"/>
<dbReference type="EMBL" id="BA000031">
    <property type="protein sequence ID" value="BAC61147.1"/>
    <property type="status" value="ALT_INIT"/>
    <property type="molecule type" value="Genomic_DNA"/>
</dbReference>
<dbReference type="RefSeq" id="NP_799263.1">
    <property type="nucleotide sequence ID" value="NC_004603.1"/>
</dbReference>
<dbReference type="RefSeq" id="WP_005496441.1">
    <property type="nucleotide sequence ID" value="NC_004603.1"/>
</dbReference>
<dbReference type="SMR" id="Q87KU1"/>
<dbReference type="GeneID" id="1190447"/>
<dbReference type="KEGG" id="vpa:VP2884"/>
<dbReference type="PATRIC" id="fig|223926.6.peg.2774"/>
<dbReference type="eggNOG" id="COG0042">
    <property type="taxonomic scope" value="Bacteria"/>
</dbReference>
<dbReference type="HOGENOM" id="CLU_013299_0_1_6"/>
<dbReference type="Proteomes" id="UP000002493">
    <property type="component" value="Chromosome 1"/>
</dbReference>
<dbReference type="GO" id="GO:0050660">
    <property type="term" value="F:flavin adenine dinucleotide binding"/>
    <property type="evidence" value="ECO:0007669"/>
    <property type="project" value="InterPro"/>
</dbReference>
<dbReference type="GO" id="GO:0010181">
    <property type="term" value="F:FMN binding"/>
    <property type="evidence" value="ECO:0007669"/>
    <property type="project" value="UniProtKB-UniRule"/>
</dbReference>
<dbReference type="GO" id="GO:0000049">
    <property type="term" value="F:tRNA binding"/>
    <property type="evidence" value="ECO:0007669"/>
    <property type="project" value="UniProtKB-UniRule"/>
</dbReference>
<dbReference type="GO" id="GO:0017150">
    <property type="term" value="F:tRNA dihydrouridine synthase activity"/>
    <property type="evidence" value="ECO:0007669"/>
    <property type="project" value="UniProtKB-UniRule"/>
</dbReference>
<dbReference type="CDD" id="cd02801">
    <property type="entry name" value="DUS_like_FMN"/>
    <property type="match status" value="1"/>
</dbReference>
<dbReference type="FunFam" id="3.20.20.70:FF:000051">
    <property type="entry name" value="tRNA-dihydrouridine synthase B"/>
    <property type="match status" value="1"/>
</dbReference>
<dbReference type="Gene3D" id="3.20.20.70">
    <property type="entry name" value="Aldolase class I"/>
    <property type="match status" value="1"/>
</dbReference>
<dbReference type="Gene3D" id="1.10.1200.80">
    <property type="entry name" value="Putative flavin oxidoreducatase, domain 2"/>
    <property type="match status" value="1"/>
</dbReference>
<dbReference type="HAMAP" id="MF_02042">
    <property type="entry name" value="DusB_subfam"/>
    <property type="match status" value="1"/>
</dbReference>
<dbReference type="InterPro" id="IPR013785">
    <property type="entry name" value="Aldolase_TIM"/>
</dbReference>
<dbReference type="InterPro" id="IPR035587">
    <property type="entry name" value="DUS-like_FMN-bd"/>
</dbReference>
<dbReference type="InterPro" id="IPR001269">
    <property type="entry name" value="DUS_fam"/>
</dbReference>
<dbReference type="InterPro" id="IPR032887">
    <property type="entry name" value="DusB"/>
</dbReference>
<dbReference type="InterPro" id="IPR004652">
    <property type="entry name" value="DusB-like"/>
</dbReference>
<dbReference type="InterPro" id="IPR024036">
    <property type="entry name" value="tRNA-dHydroUridine_Synthase_C"/>
</dbReference>
<dbReference type="InterPro" id="IPR018517">
    <property type="entry name" value="tRNA_hU_synthase_CS"/>
</dbReference>
<dbReference type="NCBIfam" id="TIGR00737">
    <property type="entry name" value="nifR3_yhdG"/>
    <property type="match status" value="1"/>
</dbReference>
<dbReference type="PANTHER" id="PTHR45846">
    <property type="entry name" value="TRNA-DIHYDROURIDINE(47) SYNTHASE [NAD(P)(+)]-LIKE"/>
    <property type="match status" value="1"/>
</dbReference>
<dbReference type="PANTHER" id="PTHR45846:SF1">
    <property type="entry name" value="TRNA-DIHYDROURIDINE(47) SYNTHASE [NAD(P)(+)]-LIKE"/>
    <property type="match status" value="1"/>
</dbReference>
<dbReference type="Pfam" id="PF01207">
    <property type="entry name" value="Dus"/>
    <property type="match status" value="1"/>
</dbReference>
<dbReference type="PIRSF" id="PIRSF006621">
    <property type="entry name" value="Dus"/>
    <property type="match status" value="1"/>
</dbReference>
<dbReference type="SUPFAM" id="SSF51395">
    <property type="entry name" value="FMN-linked oxidoreductases"/>
    <property type="match status" value="1"/>
</dbReference>
<dbReference type="PROSITE" id="PS01136">
    <property type="entry name" value="UPF0034"/>
    <property type="match status" value="1"/>
</dbReference>
<gene>
    <name evidence="1" type="primary">dusB</name>
    <name type="ordered locus">VP2884</name>
</gene>
<sequence length="322" mass="35538">MKIGNYQLKNNLIVAPMAGVTDRPFRELCLRYGAGMAVSEMMSANPKLWKTSKSKQRMVHEGESGIRSVQIAGSDPQLMADAAQFSVENGAQIIDINMGCPAKKVNKKLAGSALLQYPTIIEEILKAVVNAVDVPVTLKTRTGWDTDNKNCVQIAKLAEDCGIQALALHGRTKACMYKGEAEYDSIKAVKEAISIPVIANGDIDSPEKAKFVLEYTGADALMIGRPAQGRPWIFQEIHHYLENGTTMDELPTQEVKAIMLGHVNALHEFYGEYLGPRIARKHVGWYLKEHEQASEFRRTFNAIDAAPLQIEALEGYFDNVAS</sequence>
<keyword id="KW-0285">Flavoprotein</keyword>
<keyword id="KW-0288">FMN</keyword>
<keyword id="KW-0521">NADP</keyword>
<keyword id="KW-0560">Oxidoreductase</keyword>
<keyword id="KW-0694">RNA-binding</keyword>
<keyword id="KW-0819">tRNA processing</keyword>
<keyword id="KW-0820">tRNA-binding</keyword>
<accession>Q87KU1</accession>
<proteinExistence type="inferred from homology"/>
<evidence type="ECO:0000255" key="1">
    <source>
        <dbReference type="HAMAP-Rule" id="MF_02042"/>
    </source>
</evidence>
<evidence type="ECO:0000305" key="2"/>
<feature type="chain" id="PRO_0000162102" description="tRNA-dihydrouridine synthase B">
    <location>
        <begin position="1"/>
        <end position="322"/>
    </location>
</feature>
<feature type="active site" description="Proton donor" evidence="1">
    <location>
        <position position="100"/>
    </location>
</feature>
<feature type="binding site" evidence="1">
    <location>
        <begin position="16"/>
        <end position="18"/>
    </location>
    <ligand>
        <name>FMN</name>
        <dbReference type="ChEBI" id="CHEBI:58210"/>
    </ligand>
</feature>
<feature type="binding site" evidence="1">
    <location>
        <position position="70"/>
    </location>
    <ligand>
        <name>FMN</name>
        <dbReference type="ChEBI" id="CHEBI:58210"/>
    </ligand>
</feature>
<feature type="binding site" evidence="1">
    <location>
        <position position="139"/>
    </location>
    <ligand>
        <name>FMN</name>
        <dbReference type="ChEBI" id="CHEBI:58210"/>
    </ligand>
</feature>
<feature type="binding site" evidence="1">
    <location>
        <begin position="200"/>
        <end position="202"/>
    </location>
    <ligand>
        <name>FMN</name>
        <dbReference type="ChEBI" id="CHEBI:58210"/>
    </ligand>
</feature>
<feature type="binding site" evidence="1">
    <location>
        <begin position="224"/>
        <end position="225"/>
    </location>
    <ligand>
        <name>FMN</name>
        <dbReference type="ChEBI" id="CHEBI:58210"/>
    </ligand>
</feature>
<name>DUSB_VIBPA</name>
<reference key="1">
    <citation type="journal article" date="2003" name="Lancet">
        <title>Genome sequence of Vibrio parahaemolyticus: a pathogenic mechanism distinct from that of V. cholerae.</title>
        <authorList>
            <person name="Makino K."/>
            <person name="Oshima K."/>
            <person name="Kurokawa K."/>
            <person name="Yokoyama K."/>
            <person name="Uda T."/>
            <person name="Tagomori K."/>
            <person name="Iijima Y."/>
            <person name="Najima M."/>
            <person name="Nakano M."/>
            <person name="Yamashita A."/>
            <person name="Kubota Y."/>
            <person name="Kimura S."/>
            <person name="Yasunaga T."/>
            <person name="Honda T."/>
            <person name="Shinagawa H."/>
            <person name="Hattori M."/>
            <person name="Iida T."/>
        </authorList>
    </citation>
    <scope>NUCLEOTIDE SEQUENCE [LARGE SCALE GENOMIC DNA]</scope>
    <source>
        <strain>RIMD 2210633</strain>
    </source>
</reference>